<reference key="1">
    <citation type="journal article" date="2009" name="Stand. Genomic Sci.">
        <title>Complete genome sequence of Methanoculleus marisnigri Romesser et al. 1981 type strain JR1.</title>
        <authorList>
            <person name="Anderson I.J."/>
            <person name="Sieprawska-Lupa M."/>
            <person name="Lapidus A."/>
            <person name="Nolan M."/>
            <person name="Copeland A."/>
            <person name="Glavina Del Rio T."/>
            <person name="Tice H."/>
            <person name="Dalin E."/>
            <person name="Barry K."/>
            <person name="Saunders E."/>
            <person name="Han C."/>
            <person name="Brettin T."/>
            <person name="Detter J.C."/>
            <person name="Bruce D."/>
            <person name="Mikhailova N."/>
            <person name="Pitluck S."/>
            <person name="Hauser L."/>
            <person name="Land M."/>
            <person name="Lucas S."/>
            <person name="Richardson P."/>
            <person name="Whitman W.B."/>
            <person name="Kyrpides N.C."/>
        </authorList>
    </citation>
    <scope>NUCLEOTIDE SEQUENCE [LARGE SCALE GENOMIC DNA]</scope>
    <source>
        <strain>ATCC 35101 / DSM 1498 / JR1</strain>
    </source>
</reference>
<dbReference type="EC" id="5.4.3.8" evidence="1"/>
<dbReference type="EMBL" id="CP000562">
    <property type="protein sequence ID" value="ABN56915.1"/>
    <property type="molecule type" value="Genomic_DNA"/>
</dbReference>
<dbReference type="RefSeq" id="WP_011843826.1">
    <property type="nucleotide sequence ID" value="NC_009051.1"/>
</dbReference>
<dbReference type="SMR" id="A3CU65"/>
<dbReference type="STRING" id="368407.Memar_0982"/>
<dbReference type="GeneID" id="4846259"/>
<dbReference type="GeneID" id="76731554"/>
<dbReference type="KEGG" id="mem:Memar_0982"/>
<dbReference type="eggNOG" id="arCOG00918">
    <property type="taxonomic scope" value="Archaea"/>
</dbReference>
<dbReference type="HOGENOM" id="CLU_016922_1_5_2"/>
<dbReference type="OrthoDB" id="6524at2157"/>
<dbReference type="UniPathway" id="UPA00251">
    <property type="reaction ID" value="UER00317"/>
</dbReference>
<dbReference type="Proteomes" id="UP000002146">
    <property type="component" value="Chromosome"/>
</dbReference>
<dbReference type="GO" id="GO:0005737">
    <property type="term" value="C:cytoplasm"/>
    <property type="evidence" value="ECO:0007669"/>
    <property type="project" value="UniProtKB-SubCell"/>
</dbReference>
<dbReference type="GO" id="GO:0042286">
    <property type="term" value="F:glutamate-1-semialdehyde 2,1-aminomutase activity"/>
    <property type="evidence" value="ECO:0007669"/>
    <property type="project" value="UniProtKB-UniRule"/>
</dbReference>
<dbReference type="GO" id="GO:0030170">
    <property type="term" value="F:pyridoxal phosphate binding"/>
    <property type="evidence" value="ECO:0007669"/>
    <property type="project" value="InterPro"/>
</dbReference>
<dbReference type="GO" id="GO:0008483">
    <property type="term" value="F:transaminase activity"/>
    <property type="evidence" value="ECO:0007669"/>
    <property type="project" value="InterPro"/>
</dbReference>
<dbReference type="GO" id="GO:0006782">
    <property type="term" value="P:protoporphyrinogen IX biosynthetic process"/>
    <property type="evidence" value="ECO:0007669"/>
    <property type="project" value="UniProtKB-UniRule"/>
</dbReference>
<dbReference type="CDD" id="cd00610">
    <property type="entry name" value="OAT_like"/>
    <property type="match status" value="1"/>
</dbReference>
<dbReference type="FunFam" id="3.40.640.10:FF:000021">
    <property type="entry name" value="Glutamate-1-semialdehyde 2,1-aminomutase"/>
    <property type="match status" value="1"/>
</dbReference>
<dbReference type="Gene3D" id="3.90.1150.10">
    <property type="entry name" value="Aspartate Aminotransferase, domain 1"/>
    <property type="match status" value="1"/>
</dbReference>
<dbReference type="Gene3D" id="3.40.640.10">
    <property type="entry name" value="Type I PLP-dependent aspartate aminotransferase-like (Major domain)"/>
    <property type="match status" value="1"/>
</dbReference>
<dbReference type="HAMAP" id="MF_00375">
    <property type="entry name" value="HemL_aminotrans_3"/>
    <property type="match status" value="1"/>
</dbReference>
<dbReference type="InterPro" id="IPR004639">
    <property type="entry name" value="4pyrrol_synth_GluAld_NH2Trfase"/>
</dbReference>
<dbReference type="InterPro" id="IPR005814">
    <property type="entry name" value="Aminotrans_3"/>
</dbReference>
<dbReference type="InterPro" id="IPR049704">
    <property type="entry name" value="Aminotrans_3_PPA_site"/>
</dbReference>
<dbReference type="InterPro" id="IPR015424">
    <property type="entry name" value="PyrdxlP-dep_Trfase"/>
</dbReference>
<dbReference type="InterPro" id="IPR015421">
    <property type="entry name" value="PyrdxlP-dep_Trfase_major"/>
</dbReference>
<dbReference type="InterPro" id="IPR015422">
    <property type="entry name" value="PyrdxlP-dep_Trfase_small"/>
</dbReference>
<dbReference type="NCBIfam" id="TIGR00713">
    <property type="entry name" value="hemL"/>
    <property type="match status" value="1"/>
</dbReference>
<dbReference type="NCBIfam" id="NF000818">
    <property type="entry name" value="PRK00062.1"/>
    <property type="match status" value="1"/>
</dbReference>
<dbReference type="PANTHER" id="PTHR43713">
    <property type="entry name" value="GLUTAMATE-1-SEMIALDEHYDE 2,1-AMINOMUTASE"/>
    <property type="match status" value="1"/>
</dbReference>
<dbReference type="PANTHER" id="PTHR43713:SF3">
    <property type="entry name" value="GLUTAMATE-1-SEMIALDEHYDE 2,1-AMINOMUTASE 1, CHLOROPLASTIC-RELATED"/>
    <property type="match status" value="1"/>
</dbReference>
<dbReference type="Pfam" id="PF00202">
    <property type="entry name" value="Aminotran_3"/>
    <property type="match status" value="1"/>
</dbReference>
<dbReference type="SUPFAM" id="SSF53383">
    <property type="entry name" value="PLP-dependent transferases"/>
    <property type="match status" value="1"/>
</dbReference>
<dbReference type="PROSITE" id="PS00600">
    <property type="entry name" value="AA_TRANSFER_CLASS_3"/>
    <property type="match status" value="1"/>
</dbReference>
<evidence type="ECO:0000255" key="1">
    <source>
        <dbReference type="HAMAP-Rule" id="MF_00375"/>
    </source>
</evidence>
<feature type="chain" id="PRO_0000382405" description="Glutamate-1-semialdehyde 2,1-aminomutase">
    <location>
        <begin position="1"/>
        <end position="415"/>
    </location>
</feature>
<feature type="modified residue" description="N6-(pyridoxal phosphate)lysine" evidence="1">
    <location>
        <position position="260"/>
    </location>
</feature>
<comment type="catalytic activity">
    <reaction evidence="1">
        <text>(S)-4-amino-5-oxopentanoate = 5-aminolevulinate</text>
        <dbReference type="Rhea" id="RHEA:14265"/>
        <dbReference type="ChEBI" id="CHEBI:57501"/>
        <dbReference type="ChEBI" id="CHEBI:356416"/>
        <dbReference type="EC" id="5.4.3.8"/>
    </reaction>
</comment>
<comment type="cofactor">
    <cofactor evidence="1">
        <name>pyridoxal 5'-phosphate</name>
        <dbReference type="ChEBI" id="CHEBI:597326"/>
    </cofactor>
</comment>
<comment type="pathway">
    <text evidence="1">Porphyrin-containing compound metabolism; protoporphyrin-IX biosynthesis; 5-aminolevulinate from L-glutamyl-tRNA(Glu): step 2/2.</text>
</comment>
<comment type="subcellular location">
    <subcellularLocation>
        <location evidence="1">Cytoplasm</location>
    </subcellularLocation>
</comment>
<comment type="similarity">
    <text evidence="1">Belongs to the class-III pyridoxal-phosphate-dependent aminotransferase family. HemL subfamily.</text>
</comment>
<organism>
    <name type="scientific">Methanoculleus marisnigri (strain ATCC 35101 / DSM 1498 / JR1)</name>
    <dbReference type="NCBI Taxonomy" id="368407"/>
    <lineage>
        <taxon>Archaea</taxon>
        <taxon>Methanobacteriati</taxon>
        <taxon>Methanobacteriota</taxon>
        <taxon>Stenosarchaea group</taxon>
        <taxon>Methanomicrobia</taxon>
        <taxon>Methanomicrobiales</taxon>
        <taxon>Methanomicrobiaceae</taxon>
        <taxon>Methanoculleus</taxon>
    </lineage>
</organism>
<gene>
    <name evidence="1" type="primary">hemL</name>
    <name type="ordered locus">Memar_0982</name>
</gene>
<keyword id="KW-0963">Cytoplasm</keyword>
<keyword id="KW-0413">Isomerase</keyword>
<keyword id="KW-0627">Porphyrin biosynthesis</keyword>
<keyword id="KW-0663">Pyridoxal phosphate</keyword>
<accession>A3CU65</accession>
<protein>
    <recommendedName>
        <fullName evidence="1">Glutamate-1-semialdehyde 2,1-aminomutase</fullName>
        <shortName evidence="1">GSA</shortName>
        <ecNumber evidence="1">5.4.3.8</ecNumber>
    </recommendedName>
    <alternativeName>
        <fullName evidence="1">Glutamate-1-semialdehyde aminotransferase</fullName>
        <shortName evidence="1">GSA-AT</shortName>
    </alternativeName>
</protein>
<proteinExistence type="inferred from homology"/>
<sequence>MKSSELFNRAKTLMPGGVSSPVRAIKPYPFYVERAAGSHLTTVDGADLIDCCLGYGPLILGHAHPEVREAIERQLEKGWLYGTPTPLELDLAGIITGDHPAVEMVRFVSSGSEATMAAIRLARGYTGKQDIIKIEGGFHGAHDAVLVKAGSGATTLGVPDSAGVLADLTAHTRQVPYNDTEALEALLAGNDDVAAFILEPVMGNVGPVLPDDGYLADVREITAAHDVLLILDEVITGYRAGIGGAEVLYDVKPDLATFGKIIGGGLPIGAFGGRCDIMELVAPAGPVYQAGTFSGNPASLAAGYATLRHLHDHPEIYRRLDDATRAIGEAAADAGKGTFVRIGSLFKHFFRDAAPRDYREVKECDTEAFSRFWKAMLEAGIFLPPSQFETNFLSAAHTTQDIKQIAEAYGSCLFA</sequence>
<name>GSA_METMJ</name>